<comment type="catalytic activity">
    <reaction evidence="1">
        <text>tRNA(Lys) + L-lysine + ATP = L-lysyl-tRNA(Lys) + AMP + diphosphate</text>
        <dbReference type="Rhea" id="RHEA:20792"/>
        <dbReference type="Rhea" id="RHEA-COMP:9696"/>
        <dbReference type="Rhea" id="RHEA-COMP:9697"/>
        <dbReference type="ChEBI" id="CHEBI:30616"/>
        <dbReference type="ChEBI" id="CHEBI:32551"/>
        <dbReference type="ChEBI" id="CHEBI:33019"/>
        <dbReference type="ChEBI" id="CHEBI:78442"/>
        <dbReference type="ChEBI" id="CHEBI:78529"/>
        <dbReference type="ChEBI" id="CHEBI:456215"/>
        <dbReference type="EC" id="6.1.1.6"/>
    </reaction>
</comment>
<comment type="cofactor">
    <cofactor evidence="1">
        <name>Mg(2+)</name>
        <dbReference type="ChEBI" id="CHEBI:18420"/>
    </cofactor>
    <text evidence="1">Binds 3 Mg(2+) ions per subunit.</text>
</comment>
<comment type="subunit">
    <text evidence="1">Homodimer.</text>
</comment>
<comment type="subcellular location">
    <subcellularLocation>
        <location evidence="1">Cytoplasm</location>
    </subcellularLocation>
</comment>
<comment type="similarity">
    <text evidence="1">Belongs to the class-II aminoacyl-tRNA synthetase family.</text>
</comment>
<feature type="chain" id="PRO_1000199240" description="Lysine--tRNA ligase">
    <location>
        <begin position="1"/>
        <end position="499"/>
    </location>
</feature>
<feature type="binding site" evidence="1">
    <location>
        <position position="408"/>
    </location>
    <ligand>
        <name>Mg(2+)</name>
        <dbReference type="ChEBI" id="CHEBI:18420"/>
        <label>1</label>
    </ligand>
</feature>
<feature type="binding site" evidence="1">
    <location>
        <position position="415"/>
    </location>
    <ligand>
        <name>Mg(2+)</name>
        <dbReference type="ChEBI" id="CHEBI:18420"/>
        <label>1</label>
    </ligand>
</feature>
<feature type="binding site" evidence="1">
    <location>
        <position position="415"/>
    </location>
    <ligand>
        <name>Mg(2+)</name>
        <dbReference type="ChEBI" id="CHEBI:18420"/>
        <label>2</label>
    </ligand>
</feature>
<proteinExistence type="inferred from homology"/>
<reference key="1">
    <citation type="submission" date="2008-10" db="EMBL/GenBank/DDBJ databases">
        <title>Genome sequence of Bacillus cereus B4264.</title>
        <authorList>
            <person name="Dodson R.J."/>
            <person name="Durkin A.S."/>
            <person name="Rosovitz M.J."/>
            <person name="Rasko D.A."/>
            <person name="Hoffmaster A."/>
            <person name="Ravel J."/>
            <person name="Sutton G."/>
        </authorList>
    </citation>
    <scope>NUCLEOTIDE SEQUENCE [LARGE SCALE GENOMIC DNA]</scope>
    <source>
        <strain>B4264</strain>
    </source>
</reference>
<evidence type="ECO:0000255" key="1">
    <source>
        <dbReference type="HAMAP-Rule" id="MF_00252"/>
    </source>
</evidence>
<gene>
    <name evidence="1" type="primary">lysS</name>
    <name type="ordered locus">BCB4264_A0084</name>
</gene>
<dbReference type="EC" id="6.1.1.6" evidence="1"/>
<dbReference type="EMBL" id="CP001176">
    <property type="protein sequence ID" value="ACK60449.1"/>
    <property type="molecule type" value="Genomic_DNA"/>
</dbReference>
<dbReference type="RefSeq" id="WP_000369668.1">
    <property type="nucleotide sequence ID" value="NZ_VEHB01000020.1"/>
</dbReference>
<dbReference type="SMR" id="B7HJ16"/>
<dbReference type="KEGG" id="bcb:BCB4264_A0084"/>
<dbReference type="HOGENOM" id="CLU_008255_6_0_9"/>
<dbReference type="Proteomes" id="UP000007096">
    <property type="component" value="Chromosome"/>
</dbReference>
<dbReference type="GO" id="GO:0005829">
    <property type="term" value="C:cytosol"/>
    <property type="evidence" value="ECO:0007669"/>
    <property type="project" value="TreeGrafter"/>
</dbReference>
<dbReference type="GO" id="GO:0005524">
    <property type="term" value="F:ATP binding"/>
    <property type="evidence" value="ECO:0007669"/>
    <property type="project" value="UniProtKB-UniRule"/>
</dbReference>
<dbReference type="GO" id="GO:0140096">
    <property type="term" value="F:catalytic activity, acting on a protein"/>
    <property type="evidence" value="ECO:0007669"/>
    <property type="project" value="UniProtKB-ARBA"/>
</dbReference>
<dbReference type="GO" id="GO:0004824">
    <property type="term" value="F:lysine-tRNA ligase activity"/>
    <property type="evidence" value="ECO:0007669"/>
    <property type="project" value="UniProtKB-UniRule"/>
</dbReference>
<dbReference type="GO" id="GO:0000287">
    <property type="term" value="F:magnesium ion binding"/>
    <property type="evidence" value="ECO:0007669"/>
    <property type="project" value="UniProtKB-UniRule"/>
</dbReference>
<dbReference type="GO" id="GO:0016740">
    <property type="term" value="F:transferase activity"/>
    <property type="evidence" value="ECO:0007669"/>
    <property type="project" value="UniProtKB-ARBA"/>
</dbReference>
<dbReference type="GO" id="GO:0000049">
    <property type="term" value="F:tRNA binding"/>
    <property type="evidence" value="ECO:0007669"/>
    <property type="project" value="TreeGrafter"/>
</dbReference>
<dbReference type="GO" id="GO:0006430">
    <property type="term" value="P:lysyl-tRNA aminoacylation"/>
    <property type="evidence" value="ECO:0007669"/>
    <property type="project" value="UniProtKB-UniRule"/>
</dbReference>
<dbReference type="CDD" id="cd00775">
    <property type="entry name" value="LysRS_core"/>
    <property type="match status" value="1"/>
</dbReference>
<dbReference type="CDD" id="cd04322">
    <property type="entry name" value="LysRS_N"/>
    <property type="match status" value="1"/>
</dbReference>
<dbReference type="FunFam" id="2.40.50.140:FF:000024">
    <property type="entry name" value="Lysine--tRNA ligase"/>
    <property type="match status" value="1"/>
</dbReference>
<dbReference type="FunFam" id="3.30.930.10:FF:000001">
    <property type="entry name" value="Lysine--tRNA ligase"/>
    <property type="match status" value="1"/>
</dbReference>
<dbReference type="Gene3D" id="3.30.930.10">
    <property type="entry name" value="Bira Bifunctional Protein, Domain 2"/>
    <property type="match status" value="1"/>
</dbReference>
<dbReference type="Gene3D" id="2.40.50.140">
    <property type="entry name" value="Nucleic acid-binding proteins"/>
    <property type="match status" value="1"/>
</dbReference>
<dbReference type="HAMAP" id="MF_00252">
    <property type="entry name" value="Lys_tRNA_synth_class2"/>
    <property type="match status" value="1"/>
</dbReference>
<dbReference type="InterPro" id="IPR004364">
    <property type="entry name" value="Aa-tRNA-synt_II"/>
</dbReference>
<dbReference type="InterPro" id="IPR006195">
    <property type="entry name" value="aa-tRNA-synth_II"/>
</dbReference>
<dbReference type="InterPro" id="IPR045864">
    <property type="entry name" value="aa-tRNA-synth_II/BPL/LPL"/>
</dbReference>
<dbReference type="InterPro" id="IPR002313">
    <property type="entry name" value="Lys-tRNA-ligase_II"/>
</dbReference>
<dbReference type="InterPro" id="IPR034762">
    <property type="entry name" value="Lys-tRNA-ligase_II_bac/euk"/>
</dbReference>
<dbReference type="InterPro" id="IPR044136">
    <property type="entry name" value="Lys-tRNA-ligase_II_N"/>
</dbReference>
<dbReference type="InterPro" id="IPR018149">
    <property type="entry name" value="Lys-tRNA-synth_II_C"/>
</dbReference>
<dbReference type="InterPro" id="IPR012340">
    <property type="entry name" value="NA-bd_OB-fold"/>
</dbReference>
<dbReference type="InterPro" id="IPR004365">
    <property type="entry name" value="NA-bd_OB_tRNA"/>
</dbReference>
<dbReference type="NCBIfam" id="TIGR00499">
    <property type="entry name" value="lysS_bact"/>
    <property type="match status" value="1"/>
</dbReference>
<dbReference type="NCBIfam" id="NF001756">
    <property type="entry name" value="PRK00484.1"/>
    <property type="match status" value="1"/>
</dbReference>
<dbReference type="PANTHER" id="PTHR42918:SF15">
    <property type="entry name" value="LYSINE--TRNA LIGASE, CHLOROPLASTIC_MITOCHONDRIAL"/>
    <property type="match status" value="1"/>
</dbReference>
<dbReference type="PANTHER" id="PTHR42918">
    <property type="entry name" value="LYSYL-TRNA SYNTHETASE"/>
    <property type="match status" value="1"/>
</dbReference>
<dbReference type="Pfam" id="PF00152">
    <property type="entry name" value="tRNA-synt_2"/>
    <property type="match status" value="1"/>
</dbReference>
<dbReference type="Pfam" id="PF01336">
    <property type="entry name" value="tRNA_anti-codon"/>
    <property type="match status" value="1"/>
</dbReference>
<dbReference type="PIRSF" id="PIRSF039101">
    <property type="entry name" value="LysRS2"/>
    <property type="match status" value="1"/>
</dbReference>
<dbReference type="PRINTS" id="PR00982">
    <property type="entry name" value="TRNASYNTHLYS"/>
</dbReference>
<dbReference type="SUPFAM" id="SSF55681">
    <property type="entry name" value="Class II aaRS and biotin synthetases"/>
    <property type="match status" value="1"/>
</dbReference>
<dbReference type="SUPFAM" id="SSF50249">
    <property type="entry name" value="Nucleic acid-binding proteins"/>
    <property type="match status" value="1"/>
</dbReference>
<dbReference type="PROSITE" id="PS50862">
    <property type="entry name" value="AA_TRNA_LIGASE_II"/>
    <property type="match status" value="1"/>
</dbReference>
<sequence length="499" mass="57639">MDNMNHEELNDQLIVRREKLHNLREQGIDPFGKRFERTNSTTDLVSLYGEFSKEELEEKEIAVSIAGRIMTKRGKGKAGFAHVQDLHGQVQIYVRKDAVGDDEYELFKTADLGDLVGIEGKVFKTNVGELSVKATGFTLLTKSLRPLPDKYHGLKDVEQRYRQRYLDLITSMESRETFVTRSKIIREMRRYLDDNGYLEVETPMMHAIAGGASARPFTTHHNALDMELYMRIAIELHLKRLIVGGLEKVYEIGRVFRNEGVSTRHNPEFTMIELYEAYADYKDIMKLTEDMVAHIAKKVLGTTTIQYGDYEINLEPEWTRLHMVDAIKQYSGADFWNPMSVEEARELAKEHNVEIKDTMEVGHIINEFFEQKVEDKLIQPTFIYGHPVEISPLAKKNDEDPRFTDRFELFIVAREHANAFTELNDPIDQKERFEAQLKEREQGNDEAHMMDDDYIEALEYGMPPTGGLGIGIDRLVMLLTNAPSIRDVLLFPAMRHKQD</sequence>
<name>SYK_BACC4</name>
<accession>B7HJ16</accession>
<keyword id="KW-0030">Aminoacyl-tRNA synthetase</keyword>
<keyword id="KW-0067">ATP-binding</keyword>
<keyword id="KW-0963">Cytoplasm</keyword>
<keyword id="KW-0436">Ligase</keyword>
<keyword id="KW-0460">Magnesium</keyword>
<keyword id="KW-0479">Metal-binding</keyword>
<keyword id="KW-0547">Nucleotide-binding</keyword>
<keyword id="KW-0648">Protein biosynthesis</keyword>
<protein>
    <recommendedName>
        <fullName evidence="1">Lysine--tRNA ligase</fullName>
        <ecNumber evidence="1">6.1.1.6</ecNumber>
    </recommendedName>
    <alternativeName>
        <fullName evidence="1">Lysyl-tRNA synthetase</fullName>
        <shortName evidence="1">LysRS</shortName>
    </alternativeName>
</protein>
<organism>
    <name type="scientific">Bacillus cereus (strain B4264)</name>
    <dbReference type="NCBI Taxonomy" id="405532"/>
    <lineage>
        <taxon>Bacteria</taxon>
        <taxon>Bacillati</taxon>
        <taxon>Bacillota</taxon>
        <taxon>Bacilli</taxon>
        <taxon>Bacillales</taxon>
        <taxon>Bacillaceae</taxon>
        <taxon>Bacillus</taxon>
        <taxon>Bacillus cereus group</taxon>
    </lineage>
</organism>